<dbReference type="EMBL" id="CP000124">
    <property type="protein sequence ID" value="ABA50437.1"/>
    <property type="molecule type" value="Genomic_DNA"/>
</dbReference>
<dbReference type="RefSeq" id="WP_004192938.1">
    <property type="nucleotide sequence ID" value="NC_007434.1"/>
</dbReference>
<dbReference type="SMR" id="Q3JT10"/>
<dbReference type="EnsemblBacteria" id="ABA50437">
    <property type="protein sequence ID" value="ABA50437"/>
    <property type="gene ID" value="BURPS1710b_1893"/>
</dbReference>
<dbReference type="GeneID" id="98102114"/>
<dbReference type="KEGG" id="bpm:BURPS1710b_1893"/>
<dbReference type="HOGENOM" id="CLU_123265_0_1_4"/>
<dbReference type="Proteomes" id="UP000002700">
    <property type="component" value="Chromosome I"/>
</dbReference>
<dbReference type="GO" id="GO:1990904">
    <property type="term" value="C:ribonucleoprotein complex"/>
    <property type="evidence" value="ECO:0007669"/>
    <property type="project" value="UniProtKB-KW"/>
</dbReference>
<dbReference type="GO" id="GO:0005840">
    <property type="term" value="C:ribosome"/>
    <property type="evidence" value="ECO:0007669"/>
    <property type="project" value="UniProtKB-KW"/>
</dbReference>
<dbReference type="GO" id="GO:0019843">
    <property type="term" value="F:rRNA binding"/>
    <property type="evidence" value="ECO:0007669"/>
    <property type="project" value="UniProtKB-UniRule"/>
</dbReference>
<dbReference type="GO" id="GO:0003735">
    <property type="term" value="F:structural constituent of ribosome"/>
    <property type="evidence" value="ECO:0007669"/>
    <property type="project" value="InterPro"/>
</dbReference>
<dbReference type="GO" id="GO:0000027">
    <property type="term" value="P:ribosomal large subunit assembly"/>
    <property type="evidence" value="ECO:0007669"/>
    <property type="project" value="UniProtKB-UniRule"/>
</dbReference>
<dbReference type="GO" id="GO:0006412">
    <property type="term" value="P:translation"/>
    <property type="evidence" value="ECO:0007669"/>
    <property type="project" value="InterPro"/>
</dbReference>
<dbReference type="CDD" id="cd07026">
    <property type="entry name" value="Ribosomal_L20"/>
    <property type="match status" value="1"/>
</dbReference>
<dbReference type="FunFam" id="1.10.1900.20:FF:000001">
    <property type="entry name" value="50S ribosomal protein L20"/>
    <property type="match status" value="1"/>
</dbReference>
<dbReference type="Gene3D" id="6.10.160.10">
    <property type="match status" value="1"/>
</dbReference>
<dbReference type="Gene3D" id="1.10.1900.20">
    <property type="entry name" value="Ribosomal protein L20"/>
    <property type="match status" value="1"/>
</dbReference>
<dbReference type="HAMAP" id="MF_00382">
    <property type="entry name" value="Ribosomal_bL20"/>
    <property type="match status" value="1"/>
</dbReference>
<dbReference type="InterPro" id="IPR005813">
    <property type="entry name" value="Ribosomal_bL20"/>
</dbReference>
<dbReference type="InterPro" id="IPR049946">
    <property type="entry name" value="RIBOSOMAL_L20_CS"/>
</dbReference>
<dbReference type="InterPro" id="IPR035566">
    <property type="entry name" value="Ribosomal_protein_bL20_C"/>
</dbReference>
<dbReference type="NCBIfam" id="TIGR01032">
    <property type="entry name" value="rplT_bact"/>
    <property type="match status" value="1"/>
</dbReference>
<dbReference type="PANTHER" id="PTHR10986">
    <property type="entry name" value="39S RIBOSOMAL PROTEIN L20"/>
    <property type="match status" value="1"/>
</dbReference>
<dbReference type="Pfam" id="PF00453">
    <property type="entry name" value="Ribosomal_L20"/>
    <property type="match status" value="1"/>
</dbReference>
<dbReference type="PRINTS" id="PR00062">
    <property type="entry name" value="RIBOSOMALL20"/>
</dbReference>
<dbReference type="SUPFAM" id="SSF74731">
    <property type="entry name" value="Ribosomal protein L20"/>
    <property type="match status" value="1"/>
</dbReference>
<dbReference type="PROSITE" id="PS00937">
    <property type="entry name" value="RIBOSOMAL_L20"/>
    <property type="match status" value="1"/>
</dbReference>
<sequence>MPRVKRGVTARARHKKIINLAKGYRGRRNNVYRIAKQAVMRAGQYAYRDRRNKKRVFRALWITRINAAVRQHDMTYSVFINGLKKASIELDRKVLADMAVFDKAAFAAIVKQVKAAVAA</sequence>
<gene>
    <name evidence="1" type="primary">rplT</name>
    <name type="ordered locus">BURPS1710b_1893</name>
</gene>
<keyword id="KW-0687">Ribonucleoprotein</keyword>
<keyword id="KW-0689">Ribosomal protein</keyword>
<keyword id="KW-0694">RNA-binding</keyword>
<keyword id="KW-0699">rRNA-binding</keyword>
<organism>
    <name type="scientific">Burkholderia pseudomallei (strain 1710b)</name>
    <dbReference type="NCBI Taxonomy" id="320372"/>
    <lineage>
        <taxon>Bacteria</taxon>
        <taxon>Pseudomonadati</taxon>
        <taxon>Pseudomonadota</taxon>
        <taxon>Betaproteobacteria</taxon>
        <taxon>Burkholderiales</taxon>
        <taxon>Burkholderiaceae</taxon>
        <taxon>Burkholderia</taxon>
        <taxon>pseudomallei group</taxon>
    </lineage>
</organism>
<evidence type="ECO:0000255" key="1">
    <source>
        <dbReference type="HAMAP-Rule" id="MF_00382"/>
    </source>
</evidence>
<evidence type="ECO:0000305" key="2"/>
<proteinExistence type="inferred from homology"/>
<accession>Q3JT10</accession>
<name>RL20_BURP1</name>
<protein>
    <recommendedName>
        <fullName evidence="1">Large ribosomal subunit protein bL20</fullName>
    </recommendedName>
    <alternativeName>
        <fullName evidence="2">50S ribosomal protein L20</fullName>
    </alternativeName>
</protein>
<comment type="function">
    <text evidence="1">Binds directly to 23S ribosomal RNA and is necessary for the in vitro assembly process of the 50S ribosomal subunit. It is not involved in the protein synthesizing functions of that subunit.</text>
</comment>
<comment type="similarity">
    <text evidence="1">Belongs to the bacterial ribosomal protein bL20 family.</text>
</comment>
<reference key="1">
    <citation type="journal article" date="2010" name="Genome Biol. Evol.">
        <title>Continuing evolution of Burkholderia mallei through genome reduction and large-scale rearrangements.</title>
        <authorList>
            <person name="Losada L."/>
            <person name="Ronning C.M."/>
            <person name="DeShazer D."/>
            <person name="Woods D."/>
            <person name="Fedorova N."/>
            <person name="Kim H.S."/>
            <person name="Shabalina S.A."/>
            <person name="Pearson T.R."/>
            <person name="Brinkac L."/>
            <person name="Tan P."/>
            <person name="Nandi T."/>
            <person name="Crabtree J."/>
            <person name="Badger J."/>
            <person name="Beckstrom-Sternberg S."/>
            <person name="Saqib M."/>
            <person name="Schutzer S.E."/>
            <person name="Keim P."/>
            <person name="Nierman W.C."/>
        </authorList>
    </citation>
    <scope>NUCLEOTIDE SEQUENCE [LARGE SCALE GENOMIC DNA]</scope>
    <source>
        <strain>1710b</strain>
    </source>
</reference>
<feature type="chain" id="PRO_0000243663" description="Large ribosomal subunit protein bL20">
    <location>
        <begin position="1"/>
        <end position="119"/>
    </location>
</feature>